<comment type="subcellular location">
    <subcellularLocation>
        <location>Plastid</location>
        <location>Chloroplast</location>
    </subcellularLocation>
</comment>
<comment type="similarity">
    <text evidence="1">Belongs to the bacterial ribosomal protein bL32 family.</text>
</comment>
<organism>
    <name type="scientific">Draba nemorosa</name>
    <name type="common">Woodland whitlowgrass</name>
    <dbReference type="NCBI Taxonomy" id="171822"/>
    <lineage>
        <taxon>Eukaryota</taxon>
        <taxon>Viridiplantae</taxon>
        <taxon>Streptophyta</taxon>
        <taxon>Embryophyta</taxon>
        <taxon>Tracheophyta</taxon>
        <taxon>Spermatophyta</taxon>
        <taxon>Magnoliopsida</taxon>
        <taxon>eudicotyledons</taxon>
        <taxon>Gunneridae</taxon>
        <taxon>Pentapetalae</taxon>
        <taxon>rosids</taxon>
        <taxon>malvids</taxon>
        <taxon>Brassicales</taxon>
        <taxon>Brassicaceae</taxon>
        <taxon>Arabideae</taxon>
        <taxon>Draba</taxon>
    </lineage>
</organism>
<proteinExistence type="inferred from homology"/>
<reference key="1">
    <citation type="submission" date="2007-03" db="EMBL/GenBank/DDBJ databases">
        <title>Sequencing analysis of Draba nemoroza chloroplast DNA.</title>
        <authorList>
            <person name="Hosouchi T."/>
            <person name="Tsuruoka H."/>
            <person name="Kotani H."/>
        </authorList>
    </citation>
    <scope>NUCLEOTIDE SEQUENCE [LARGE SCALE GENOMIC DNA]</scope>
</reference>
<name>RK32_DRANE</name>
<evidence type="ECO:0000255" key="1">
    <source>
        <dbReference type="HAMAP-Rule" id="MF_00340"/>
    </source>
</evidence>
<evidence type="ECO:0000305" key="2"/>
<geneLocation type="chloroplast"/>
<dbReference type="EMBL" id="AP009373">
    <property type="protein sequence ID" value="BAF50424.1"/>
    <property type="molecule type" value="Genomic_DNA"/>
</dbReference>
<dbReference type="RefSeq" id="YP_001123599.1">
    <property type="nucleotide sequence ID" value="NC_009272.1"/>
</dbReference>
<dbReference type="SMR" id="A4QL69"/>
<dbReference type="GeneID" id="4964753"/>
<dbReference type="GO" id="GO:0009507">
    <property type="term" value="C:chloroplast"/>
    <property type="evidence" value="ECO:0007669"/>
    <property type="project" value="UniProtKB-SubCell"/>
</dbReference>
<dbReference type="GO" id="GO:0015934">
    <property type="term" value="C:large ribosomal subunit"/>
    <property type="evidence" value="ECO:0007669"/>
    <property type="project" value="InterPro"/>
</dbReference>
<dbReference type="GO" id="GO:0003735">
    <property type="term" value="F:structural constituent of ribosome"/>
    <property type="evidence" value="ECO:0007669"/>
    <property type="project" value="InterPro"/>
</dbReference>
<dbReference type="GO" id="GO:0006412">
    <property type="term" value="P:translation"/>
    <property type="evidence" value="ECO:0007669"/>
    <property type="project" value="UniProtKB-UniRule"/>
</dbReference>
<dbReference type="HAMAP" id="MF_00340">
    <property type="entry name" value="Ribosomal_bL32"/>
    <property type="match status" value="1"/>
</dbReference>
<dbReference type="InterPro" id="IPR002677">
    <property type="entry name" value="Ribosomal_bL32"/>
</dbReference>
<dbReference type="InterPro" id="IPR044958">
    <property type="entry name" value="Ribosomal_bL32_plant/cyanobact"/>
</dbReference>
<dbReference type="InterPro" id="IPR011332">
    <property type="entry name" value="Ribosomal_zn-bd"/>
</dbReference>
<dbReference type="PANTHER" id="PTHR36083">
    <property type="entry name" value="50S RIBOSOMAL PROTEIN L32, CHLOROPLASTIC"/>
    <property type="match status" value="1"/>
</dbReference>
<dbReference type="PANTHER" id="PTHR36083:SF1">
    <property type="entry name" value="LARGE RIBOSOMAL SUBUNIT PROTEIN BL32C"/>
    <property type="match status" value="1"/>
</dbReference>
<dbReference type="Pfam" id="PF01783">
    <property type="entry name" value="Ribosomal_L32p"/>
    <property type="match status" value="1"/>
</dbReference>
<dbReference type="SUPFAM" id="SSF57829">
    <property type="entry name" value="Zn-binding ribosomal proteins"/>
    <property type="match status" value="1"/>
</dbReference>
<protein>
    <recommendedName>
        <fullName evidence="1">Large ribosomal subunit protein bL32c</fullName>
    </recommendedName>
    <alternativeName>
        <fullName evidence="2">50S ribosomal protein L32, chloroplastic</fullName>
    </alternativeName>
</protein>
<feature type="chain" id="PRO_0000296612" description="Large ribosomal subunit protein bL32c">
    <location>
        <begin position="1"/>
        <end position="52"/>
    </location>
</feature>
<sequence length="52" mass="6047">MAVPKKRTSISKKRIRKNIWKRKGYWTSLKAFSLGKSLSTGNSKSFFVQQNK</sequence>
<gene>
    <name evidence="1" type="primary">rpl32</name>
</gene>
<accession>A4QL69</accession>
<keyword id="KW-0150">Chloroplast</keyword>
<keyword id="KW-0934">Plastid</keyword>
<keyword id="KW-0687">Ribonucleoprotein</keyword>
<keyword id="KW-0689">Ribosomal protein</keyword>